<proteinExistence type="inferred from homology"/>
<name>RIMM_SYNE7</name>
<sequence>MSESTTTIETAWLAIGQIVAPQGLRGEMRVNPSSDFPERFLIPGPRWLRRPRQTEPEVVELERGRAIAGKNLYIVQLAGITSREQAEALRGCELLVPASDRPELDEGEFHVLDLIDLSVIDQASSTPLGIVRDVVSAGNDLLVVELTDGREVYIPFVEAIVPVVDLAQGRIEITPPPGLLEL</sequence>
<evidence type="ECO:0000255" key="1">
    <source>
        <dbReference type="HAMAP-Rule" id="MF_00014"/>
    </source>
</evidence>
<keyword id="KW-0143">Chaperone</keyword>
<keyword id="KW-0963">Cytoplasm</keyword>
<keyword id="KW-1185">Reference proteome</keyword>
<keyword id="KW-0690">Ribosome biogenesis</keyword>
<keyword id="KW-0698">rRNA processing</keyword>
<reference key="1">
    <citation type="submission" date="2005-08" db="EMBL/GenBank/DDBJ databases">
        <title>Complete sequence of chromosome 1 of Synechococcus elongatus PCC 7942.</title>
        <authorList>
            <consortium name="US DOE Joint Genome Institute"/>
            <person name="Copeland A."/>
            <person name="Lucas S."/>
            <person name="Lapidus A."/>
            <person name="Barry K."/>
            <person name="Detter J.C."/>
            <person name="Glavina T."/>
            <person name="Hammon N."/>
            <person name="Israni S."/>
            <person name="Pitluck S."/>
            <person name="Schmutz J."/>
            <person name="Larimer F."/>
            <person name="Land M."/>
            <person name="Kyrpides N."/>
            <person name="Lykidis A."/>
            <person name="Golden S."/>
            <person name="Richardson P."/>
        </authorList>
    </citation>
    <scope>NUCLEOTIDE SEQUENCE [LARGE SCALE GENOMIC DNA]</scope>
    <source>
        <strain>ATCC 33912 / PCC 7942 / FACHB-805</strain>
    </source>
</reference>
<feature type="chain" id="PRO_0000244180" description="Ribosome maturation factor RimM">
    <location>
        <begin position="1"/>
        <end position="182"/>
    </location>
</feature>
<feature type="domain" description="PRC barrel" evidence="1">
    <location>
        <begin position="106"/>
        <end position="179"/>
    </location>
</feature>
<protein>
    <recommendedName>
        <fullName evidence="1">Ribosome maturation factor RimM</fullName>
    </recommendedName>
</protein>
<comment type="function">
    <text evidence="1">An accessory protein needed during the final step in the assembly of 30S ribosomal subunit, possibly for assembly of the head region. Essential for efficient processing of 16S rRNA. May be needed both before and after RbfA during the maturation of 16S rRNA. It has affinity for free ribosomal 30S subunits but not for 70S ribosomes.</text>
</comment>
<comment type="subunit">
    <text evidence="1">Binds ribosomal protein uS19.</text>
</comment>
<comment type="subcellular location">
    <subcellularLocation>
        <location evidence="1">Cytoplasm</location>
    </subcellularLocation>
</comment>
<comment type="domain">
    <text evidence="1">The PRC barrel domain binds ribosomal protein uS19.</text>
</comment>
<comment type="similarity">
    <text evidence="1">Belongs to the RimM family.</text>
</comment>
<organism>
    <name type="scientific">Synechococcus elongatus (strain ATCC 33912 / PCC 7942 / FACHB-805)</name>
    <name type="common">Anacystis nidulans R2</name>
    <dbReference type="NCBI Taxonomy" id="1140"/>
    <lineage>
        <taxon>Bacteria</taxon>
        <taxon>Bacillati</taxon>
        <taxon>Cyanobacteriota</taxon>
        <taxon>Cyanophyceae</taxon>
        <taxon>Synechococcales</taxon>
        <taxon>Synechococcaceae</taxon>
        <taxon>Synechococcus</taxon>
    </lineage>
</organism>
<gene>
    <name evidence="1" type="primary">rimM</name>
    <name type="ordered locus">Synpcc7942_2259</name>
</gene>
<dbReference type="EMBL" id="CP000100">
    <property type="protein sequence ID" value="ABB58289.1"/>
    <property type="molecule type" value="Genomic_DNA"/>
</dbReference>
<dbReference type="RefSeq" id="WP_011244149.1">
    <property type="nucleotide sequence ID" value="NZ_JACJTX010000001.1"/>
</dbReference>
<dbReference type="SMR" id="Q31KY0"/>
<dbReference type="STRING" id="1140.Synpcc7942_2259"/>
<dbReference type="PaxDb" id="1140-Synpcc7942_2259"/>
<dbReference type="GeneID" id="72431144"/>
<dbReference type="KEGG" id="syf:Synpcc7942_2259"/>
<dbReference type="eggNOG" id="COG0806">
    <property type="taxonomic scope" value="Bacteria"/>
</dbReference>
<dbReference type="HOGENOM" id="CLU_077636_0_0_3"/>
<dbReference type="OrthoDB" id="9810331at2"/>
<dbReference type="BioCyc" id="SYNEL:SYNPCC7942_2259-MONOMER"/>
<dbReference type="Proteomes" id="UP000889800">
    <property type="component" value="Chromosome"/>
</dbReference>
<dbReference type="GO" id="GO:0005737">
    <property type="term" value="C:cytoplasm"/>
    <property type="evidence" value="ECO:0007669"/>
    <property type="project" value="UniProtKB-SubCell"/>
</dbReference>
<dbReference type="GO" id="GO:0005840">
    <property type="term" value="C:ribosome"/>
    <property type="evidence" value="ECO:0007669"/>
    <property type="project" value="InterPro"/>
</dbReference>
<dbReference type="GO" id="GO:0043022">
    <property type="term" value="F:ribosome binding"/>
    <property type="evidence" value="ECO:0007669"/>
    <property type="project" value="InterPro"/>
</dbReference>
<dbReference type="GO" id="GO:0042274">
    <property type="term" value="P:ribosomal small subunit biogenesis"/>
    <property type="evidence" value="ECO:0007669"/>
    <property type="project" value="UniProtKB-UniRule"/>
</dbReference>
<dbReference type="GO" id="GO:0006364">
    <property type="term" value="P:rRNA processing"/>
    <property type="evidence" value="ECO:0007669"/>
    <property type="project" value="UniProtKB-UniRule"/>
</dbReference>
<dbReference type="Gene3D" id="2.30.30.240">
    <property type="entry name" value="PRC-barrel domain"/>
    <property type="match status" value="1"/>
</dbReference>
<dbReference type="Gene3D" id="2.40.30.60">
    <property type="entry name" value="RimM"/>
    <property type="match status" value="1"/>
</dbReference>
<dbReference type="HAMAP" id="MF_00014">
    <property type="entry name" value="Ribosome_mat_RimM"/>
    <property type="match status" value="1"/>
</dbReference>
<dbReference type="InterPro" id="IPR011033">
    <property type="entry name" value="PRC_barrel-like_sf"/>
</dbReference>
<dbReference type="InterPro" id="IPR056792">
    <property type="entry name" value="PRC_RimM"/>
</dbReference>
<dbReference type="InterPro" id="IPR011961">
    <property type="entry name" value="RimM"/>
</dbReference>
<dbReference type="InterPro" id="IPR002676">
    <property type="entry name" value="RimM_N"/>
</dbReference>
<dbReference type="InterPro" id="IPR036976">
    <property type="entry name" value="RimM_N_sf"/>
</dbReference>
<dbReference type="InterPro" id="IPR009000">
    <property type="entry name" value="Transl_B-barrel_sf"/>
</dbReference>
<dbReference type="NCBIfam" id="TIGR02273">
    <property type="entry name" value="16S_RimM"/>
    <property type="match status" value="1"/>
</dbReference>
<dbReference type="PANTHER" id="PTHR33692">
    <property type="entry name" value="RIBOSOME MATURATION FACTOR RIMM"/>
    <property type="match status" value="1"/>
</dbReference>
<dbReference type="PANTHER" id="PTHR33692:SF1">
    <property type="entry name" value="RIBOSOME MATURATION FACTOR RIMM"/>
    <property type="match status" value="1"/>
</dbReference>
<dbReference type="Pfam" id="PF24986">
    <property type="entry name" value="PRC_RimM"/>
    <property type="match status" value="1"/>
</dbReference>
<dbReference type="Pfam" id="PF01782">
    <property type="entry name" value="RimM"/>
    <property type="match status" value="1"/>
</dbReference>
<dbReference type="SUPFAM" id="SSF50346">
    <property type="entry name" value="PRC-barrel domain"/>
    <property type="match status" value="1"/>
</dbReference>
<dbReference type="SUPFAM" id="SSF50447">
    <property type="entry name" value="Translation proteins"/>
    <property type="match status" value="1"/>
</dbReference>
<accession>Q31KY0</accession>